<geneLocation type="cyanelle"/>
<comment type="subcellular location">
    <subcellularLocation>
        <location>Plastid</location>
        <location>Cyanelle</location>
    </subcellularLocation>
</comment>
<keyword id="KW-0194">Cyanelle</keyword>
<keyword id="KW-0934">Plastid</keyword>
<accession>P48336</accession>
<proteinExistence type="predicted"/>
<dbReference type="EMBL" id="U30821">
    <property type="protein sequence ID" value="AAA81306.1"/>
    <property type="molecule type" value="Genomic_DNA"/>
</dbReference>
<dbReference type="PIR" id="T06963">
    <property type="entry name" value="T06963"/>
</dbReference>
<dbReference type="RefSeq" id="NP_043275.1">
    <property type="nucleotide sequence ID" value="NC_001675.1"/>
</dbReference>
<dbReference type="GeneID" id="1457214"/>
<dbReference type="GO" id="GO:0009842">
    <property type="term" value="C:cyanelle"/>
    <property type="evidence" value="ECO:0007669"/>
    <property type="project" value="UniProtKB-SubCell"/>
</dbReference>
<feature type="chain" id="PRO_0000217434" description="Uncharacterized 11.2 kDa protein in ycf23-apcF intergenic region">
    <location>
        <begin position="1"/>
        <end position="91"/>
    </location>
</feature>
<protein>
    <recommendedName>
        <fullName>Uncharacterized 11.2 kDa protein in ycf23-apcF intergenic region</fullName>
    </recommendedName>
    <alternativeName>
        <fullName>ORF91</fullName>
    </alternativeName>
</protein>
<reference key="1">
    <citation type="journal article" date="1995" name="Plant Mol. Biol. Rep.">
        <title>Nucleotide sequence of the cyanelle DNA from Cyanophora paradoxa.</title>
        <authorList>
            <person name="Stirewalt V.L."/>
            <person name="Michalowski C.B."/>
            <person name="Loeffelhardt W."/>
            <person name="Bohnert H.J."/>
            <person name="Bryant D.A."/>
        </authorList>
    </citation>
    <scope>NUCLEOTIDE SEQUENCE [LARGE SCALE GENOMIC DNA]</scope>
    <source>
        <strain>UTEX LB 555 / Pringsheim</strain>
    </source>
</reference>
<reference key="2">
    <citation type="book" date="1997" name="Eukaryotism and symbiosis">
        <title>The complete sequence of the cyanelle genome of Cyanophora paradoxa: the genetic complexity of a primitive plastid.</title>
        <editorList>
            <person name="Schenk H.E.A."/>
            <person name="Herrmann R."/>
            <person name="Jeon K.W."/>
            <person name="Mueller N.E."/>
            <person name="Schwemmler W."/>
        </editorList>
        <authorList>
            <person name="Loeffelhardt W."/>
            <person name="Stirewalt V.L."/>
            <person name="Michalowski C.B."/>
            <person name="Annarella M."/>
            <person name="Farley J.Y."/>
            <person name="Schluchter W.M."/>
            <person name="Chung S."/>
            <person name="Newmann-Spallart C."/>
            <person name="Steiner J.M."/>
            <person name="Jakowitsch J."/>
            <person name="Bohnert H.J."/>
            <person name="Bryant D.A."/>
        </authorList>
    </citation>
    <scope>NUCLEOTIDE SEQUENCE [LARGE SCALE GENOMIC DNA]</scope>
    <source>
        <strain>UTEX LB 555 / Pringsheim</strain>
    </source>
</reference>
<sequence>MQNSNWYKFFKNIKPEIISFSFLVSLLWFIRSPLKNTTELLEFEVEPKTIPFNQEFLNQVYEKAKHKYIWNYSPTQIIHKLEKLINTRIRI</sequence>
<organism>
    <name type="scientific">Cyanophora paradoxa</name>
    <dbReference type="NCBI Taxonomy" id="2762"/>
    <lineage>
        <taxon>Eukaryota</taxon>
        <taxon>Glaucocystophyceae</taxon>
        <taxon>Cyanophoraceae</taxon>
        <taxon>Cyanophora</taxon>
    </lineage>
</organism>
<name>YCXF_CYAPA</name>